<proteinExistence type="evidence at transcript level"/>
<gene>
    <name type="primary">Cyp9b1</name>
    <name type="ORF">CG4485</name>
</gene>
<dbReference type="EC" id="1.14.-.-"/>
<dbReference type="EMBL" id="AE013599">
    <property type="protein sequence ID" value="AAF59291.1"/>
    <property type="molecule type" value="Genomic_DNA"/>
</dbReference>
<dbReference type="EMBL" id="U34324">
    <property type="protein sequence ID" value="AAA80658.1"/>
    <property type="molecule type" value="mRNA"/>
</dbReference>
<dbReference type="PIR" id="S70620">
    <property type="entry name" value="S70620"/>
</dbReference>
<dbReference type="RefSeq" id="NP_523645.1">
    <property type="nucleotide sequence ID" value="NM_078921.4"/>
</dbReference>
<dbReference type="SMR" id="Q9V4I0"/>
<dbReference type="FunCoup" id="Q9V4I0">
    <property type="interactions" value="62"/>
</dbReference>
<dbReference type="STRING" id="7227.FBpp0088127"/>
<dbReference type="PaxDb" id="7227-FBpp0088127"/>
<dbReference type="DNASU" id="35634"/>
<dbReference type="EnsemblMetazoa" id="FBtr0089056">
    <property type="protein sequence ID" value="FBpp0088127"/>
    <property type="gene ID" value="FBgn0015038"/>
</dbReference>
<dbReference type="GeneID" id="35634"/>
<dbReference type="KEGG" id="dme:Dmel_CG4485"/>
<dbReference type="AGR" id="FB:FBgn0015038"/>
<dbReference type="CTD" id="35634"/>
<dbReference type="FlyBase" id="FBgn0015038">
    <property type="gene designation" value="Cyp9b1"/>
</dbReference>
<dbReference type="VEuPathDB" id="VectorBase:FBgn0015038"/>
<dbReference type="eggNOG" id="KOG0158">
    <property type="taxonomic scope" value="Eukaryota"/>
</dbReference>
<dbReference type="GeneTree" id="ENSGT00940000165057"/>
<dbReference type="HOGENOM" id="CLU_001570_5_2_1"/>
<dbReference type="InParanoid" id="Q9V4I0"/>
<dbReference type="OMA" id="MQLVPRQ"/>
<dbReference type="OrthoDB" id="2789670at2759"/>
<dbReference type="PhylomeDB" id="Q9V4I0"/>
<dbReference type="BioGRID-ORCS" id="35634">
    <property type="hits" value="0 hits in 3 CRISPR screens"/>
</dbReference>
<dbReference type="GenomeRNAi" id="35634"/>
<dbReference type="PRO" id="PR:Q9V4I0"/>
<dbReference type="Proteomes" id="UP000000803">
    <property type="component" value="Chromosome 2R"/>
</dbReference>
<dbReference type="Bgee" id="FBgn0015038">
    <property type="expression patterns" value="Expressed in crop (Drosophila) and 16 other cell types or tissues"/>
</dbReference>
<dbReference type="ExpressionAtlas" id="Q9V4I0">
    <property type="expression patterns" value="baseline and differential"/>
</dbReference>
<dbReference type="GO" id="GO:0005789">
    <property type="term" value="C:endoplasmic reticulum membrane"/>
    <property type="evidence" value="ECO:0007669"/>
    <property type="project" value="UniProtKB-SubCell"/>
</dbReference>
<dbReference type="GO" id="GO:0020037">
    <property type="term" value="F:heme binding"/>
    <property type="evidence" value="ECO:0007669"/>
    <property type="project" value="InterPro"/>
</dbReference>
<dbReference type="GO" id="GO:0005506">
    <property type="term" value="F:iron ion binding"/>
    <property type="evidence" value="ECO:0007669"/>
    <property type="project" value="InterPro"/>
</dbReference>
<dbReference type="GO" id="GO:0004497">
    <property type="term" value="F:monooxygenase activity"/>
    <property type="evidence" value="ECO:0007669"/>
    <property type="project" value="UniProtKB-KW"/>
</dbReference>
<dbReference type="GO" id="GO:0016705">
    <property type="term" value="F:oxidoreductase activity, acting on paired donors, with incorporation or reduction of molecular oxygen"/>
    <property type="evidence" value="ECO:0007669"/>
    <property type="project" value="InterPro"/>
</dbReference>
<dbReference type="CDD" id="cd11056">
    <property type="entry name" value="CYP6-like"/>
    <property type="match status" value="1"/>
</dbReference>
<dbReference type="FunFam" id="1.10.630.10:FF:000042">
    <property type="entry name" value="Cytochrome P450"/>
    <property type="match status" value="1"/>
</dbReference>
<dbReference type="Gene3D" id="1.10.630.10">
    <property type="entry name" value="Cytochrome P450"/>
    <property type="match status" value="1"/>
</dbReference>
<dbReference type="InterPro" id="IPR001128">
    <property type="entry name" value="Cyt_P450"/>
</dbReference>
<dbReference type="InterPro" id="IPR017972">
    <property type="entry name" value="Cyt_P450_CS"/>
</dbReference>
<dbReference type="InterPro" id="IPR002403">
    <property type="entry name" value="Cyt_P450_E_grp-IV"/>
</dbReference>
<dbReference type="InterPro" id="IPR036396">
    <property type="entry name" value="Cyt_P450_sf"/>
</dbReference>
<dbReference type="InterPro" id="IPR050476">
    <property type="entry name" value="Insect_CytP450_Detox"/>
</dbReference>
<dbReference type="PANTHER" id="PTHR24292:SF54">
    <property type="entry name" value="CYP9F3-RELATED"/>
    <property type="match status" value="1"/>
</dbReference>
<dbReference type="PANTHER" id="PTHR24292">
    <property type="entry name" value="CYTOCHROME P450"/>
    <property type="match status" value="1"/>
</dbReference>
<dbReference type="Pfam" id="PF00067">
    <property type="entry name" value="p450"/>
    <property type="match status" value="1"/>
</dbReference>
<dbReference type="PRINTS" id="PR00465">
    <property type="entry name" value="EP450IV"/>
</dbReference>
<dbReference type="PRINTS" id="PR00385">
    <property type="entry name" value="P450"/>
</dbReference>
<dbReference type="SUPFAM" id="SSF48264">
    <property type="entry name" value="Cytochrome P450"/>
    <property type="match status" value="1"/>
</dbReference>
<dbReference type="PROSITE" id="PS00086">
    <property type="entry name" value="CYTOCHROME_P450"/>
    <property type="match status" value="1"/>
</dbReference>
<comment type="function">
    <text evidence="1">May be involved in the metabolism of insect hormones and in the breakdown of synthetic insecticides.</text>
</comment>
<comment type="cofactor">
    <cofactor evidence="1">
        <name>heme</name>
        <dbReference type="ChEBI" id="CHEBI:30413"/>
    </cofactor>
</comment>
<comment type="subcellular location">
    <subcellularLocation>
        <location evidence="2">Endoplasmic reticulum membrane</location>
        <topology evidence="2">Peripheral membrane protein</topology>
    </subcellularLocation>
    <subcellularLocation>
        <location evidence="2">Microsome membrane</location>
        <topology evidence="2">Peripheral membrane protein</topology>
    </subcellularLocation>
</comment>
<comment type="similarity">
    <text evidence="2">Belongs to the cytochrome P450 family.</text>
</comment>
<name>CP9B1_DROME</name>
<sequence length="505" mass="58736">MSFVEICLVLATIGLLLFKWSTGTFKAFEGRNLYFEKPYPFLGNMAASALQKASFQKQISEFYNRTRHHKLVGLFNLRTPMIQINDPQLIKKICVKDFDHFPNHQTLNIPNERLVNDMLNVMRDQHWRNMRSVLTPVFTSAKMRNMFTLMNESFAQCLEHLKSSQPIAAGENAFELDMKVLCNKLSNDVIATTAFGLKVNSFDDPENEFHTIGKTLAFSRGLPFLKFMMCLLAPKVFNFFKLTIFDSTNVEYFVRLVVDAMQYREKHNITRPDMIQLLMEAKKESKDNWTDDEIVAQCFIFFFAAFENNSNLICTTAYELLRNLDIQERLYEEVKETQEALKGAPLTYDAAQEMTYMDMVISESLRKWTLSAAADRLCAKDYTLTDDEGTKLFEFKAGDNINIPICGLHWDERFFPQPQRFDPERFSERRKKDLIPYTYLPFGVGPRSCIGNRYAVMQAKGMLYNLMLNYKIEASPRTTRDMWESARGFNIIPTTGFWMQLVSRK</sequence>
<feature type="chain" id="PRO_0000051916" description="Cytochrome P450 9b1">
    <location>
        <begin position="1"/>
        <end position="505"/>
    </location>
</feature>
<feature type="binding site" description="axial binding residue" evidence="1">
    <location>
        <position position="449"/>
    </location>
    <ligand>
        <name>heme</name>
        <dbReference type="ChEBI" id="CHEBI:30413"/>
    </ligand>
    <ligandPart>
        <name>Fe</name>
        <dbReference type="ChEBI" id="CHEBI:18248"/>
    </ligandPart>
</feature>
<feature type="sequence conflict" description="In Ref. 1; AAA80658." evidence="2" ref="1">
    <original>P</original>
    <variation>L</variation>
    <location>
        <position position="345"/>
    </location>
</feature>
<keyword id="KW-0256">Endoplasmic reticulum</keyword>
<keyword id="KW-0349">Heme</keyword>
<keyword id="KW-0408">Iron</keyword>
<keyword id="KW-0472">Membrane</keyword>
<keyword id="KW-0479">Metal-binding</keyword>
<keyword id="KW-0492">Microsome</keyword>
<keyword id="KW-0503">Monooxygenase</keyword>
<keyword id="KW-0560">Oxidoreductase</keyword>
<keyword id="KW-1185">Reference proteome</keyword>
<organism>
    <name type="scientific">Drosophila melanogaster</name>
    <name type="common">Fruit fly</name>
    <dbReference type="NCBI Taxonomy" id="7227"/>
    <lineage>
        <taxon>Eukaryota</taxon>
        <taxon>Metazoa</taxon>
        <taxon>Ecdysozoa</taxon>
        <taxon>Arthropoda</taxon>
        <taxon>Hexapoda</taxon>
        <taxon>Insecta</taxon>
        <taxon>Pterygota</taxon>
        <taxon>Neoptera</taxon>
        <taxon>Endopterygota</taxon>
        <taxon>Diptera</taxon>
        <taxon>Brachycera</taxon>
        <taxon>Muscomorpha</taxon>
        <taxon>Ephydroidea</taxon>
        <taxon>Drosophilidae</taxon>
        <taxon>Drosophila</taxon>
        <taxon>Sophophora</taxon>
    </lineage>
</organism>
<reference key="1">
    <citation type="journal article" date="2000" name="Science">
        <title>The genome sequence of Drosophila melanogaster.</title>
        <authorList>
            <person name="Adams M.D."/>
            <person name="Celniker S.E."/>
            <person name="Holt R.A."/>
            <person name="Evans C.A."/>
            <person name="Gocayne J.D."/>
            <person name="Amanatides P.G."/>
            <person name="Scherer S.E."/>
            <person name="Li P.W."/>
            <person name="Hoskins R.A."/>
            <person name="Galle R.F."/>
            <person name="George R.A."/>
            <person name="Lewis S.E."/>
            <person name="Richards S."/>
            <person name="Ashburner M."/>
            <person name="Henderson S.N."/>
            <person name="Sutton G.G."/>
            <person name="Wortman J.R."/>
            <person name="Yandell M.D."/>
            <person name="Zhang Q."/>
            <person name="Chen L.X."/>
            <person name="Brandon R.C."/>
            <person name="Rogers Y.-H.C."/>
            <person name="Blazej R.G."/>
            <person name="Champe M."/>
            <person name="Pfeiffer B.D."/>
            <person name="Wan K.H."/>
            <person name="Doyle C."/>
            <person name="Baxter E.G."/>
            <person name="Helt G."/>
            <person name="Nelson C.R."/>
            <person name="Miklos G.L.G."/>
            <person name="Abril J.F."/>
            <person name="Agbayani A."/>
            <person name="An H.-J."/>
            <person name="Andrews-Pfannkoch C."/>
            <person name="Baldwin D."/>
            <person name="Ballew R.M."/>
            <person name="Basu A."/>
            <person name="Baxendale J."/>
            <person name="Bayraktaroglu L."/>
            <person name="Beasley E.M."/>
            <person name="Beeson K.Y."/>
            <person name="Benos P.V."/>
            <person name="Berman B.P."/>
            <person name="Bhandari D."/>
            <person name="Bolshakov S."/>
            <person name="Borkova D."/>
            <person name="Botchan M.R."/>
            <person name="Bouck J."/>
            <person name="Brokstein P."/>
            <person name="Brottier P."/>
            <person name="Burtis K.C."/>
            <person name="Busam D.A."/>
            <person name="Butler H."/>
            <person name="Cadieu E."/>
            <person name="Center A."/>
            <person name="Chandra I."/>
            <person name="Cherry J.M."/>
            <person name="Cawley S."/>
            <person name="Dahlke C."/>
            <person name="Davenport L.B."/>
            <person name="Davies P."/>
            <person name="de Pablos B."/>
            <person name="Delcher A."/>
            <person name="Deng Z."/>
            <person name="Mays A.D."/>
            <person name="Dew I."/>
            <person name="Dietz S.M."/>
            <person name="Dodson K."/>
            <person name="Doup L.E."/>
            <person name="Downes M."/>
            <person name="Dugan-Rocha S."/>
            <person name="Dunkov B.C."/>
            <person name="Dunn P."/>
            <person name="Durbin K.J."/>
            <person name="Evangelista C.C."/>
            <person name="Ferraz C."/>
            <person name="Ferriera S."/>
            <person name="Fleischmann W."/>
            <person name="Fosler C."/>
            <person name="Gabrielian A.E."/>
            <person name="Garg N.S."/>
            <person name="Gelbart W.M."/>
            <person name="Glasser K."/>
            <person name="Glodek A."/>
            <person name="Gong F."/>
            <person name="Gorrell J.H."/>
            <person name="Gu Z."/>
            <person name="Guan P."/>
            <person name="Harris M."/>
            <person name="Harris N.L."/>
            <person name="Harvey D.A."/>
            <person name="Heiman T.J."/>
            <person name="Hernandez J.R."/>
            <person name="Houck J."/>
            <person name="Hostin D."/>
            <person name="Houston K.A."/>
            <person name="Howland T.J."/>
            <person name="Wei M.-H."/>
            <person name="Ibegwam C."/>
            <person name="Jalali M."/>
            <person name="Kalush F."/>
            <person name="Karpen G.H."/>
            <person name="Ke Z."/>
            <person name="Kennison J.A."/>
            <person name="Ketchum K.A."/>
            <person name="Kimmel B.E."/>
            <person name="Kodira C.D."/>
            <person name="Kraft C.L."/>
            <person name="Kravitz S."/>
            <person name="Kulp D."/>
            <person name="Lai Z."/>
            <person name="Lasko P."/>
            <person name="Lei Y."/>
            <person name="Levitsky A.A."/>
            <person name="Li J.H."/>
            <person name="Li Z."/>
            <person name="Liang Y."/>
            <person name="Lin X."/>
            <person name="Liu X."/>
            <person name="Mattei B."/>
            <person name="McIntosh T.C."/>
            <person name="McLeod M.P."/>
            <person name="McPherson D."/>
            <person name="Merkulov G."/>
            <person name="Milshina N.V."/>
            <person name="Mobarry C."/>
            <person name="Morris J."/>
            <person name="Moshrefi A."/>
            <person name="Mount S.M."/>
            <person name="Moy M."/>
            <person name="Murphy B."/>
            <person name="Murphy L."/>
            <person name="Muzny D.M."/>
            <person name="Nelson D.L."/>
            <person name="Nelson D.R."/>
            <person name="Nelson K.A."/>
            <person name="Nixon K."/>
            <person name="Nusskern D.R."/>
            <person name="Pacleb J.M."/>
            <person name="Palazzolo M."/>
            <person name="Pittman G.S."/>
            <person name="Pan S."/>
            <person name="Pollard J."/>
            <person name="Puri V."/>
            <person name="Reese M.G."/>
            <person name="Reinert K."/>
            <person name="Remington K."/>
            <person name="Saunders R.D.C."/>
            <person name="Scheeler F."/>
            <person name="Shen H."/>
            <person name="Shue B.C."/>
            <person name="Siden-Kiamos I."/>
            <person name="Simpson M."/>
            <person name="Skupski M.P."/>
            <person name="Smith T.J."/>
            <person name="Spier E."/>
            <person name="Spradling A.C."/>
            <person name="Stapleton M."/>
            <person name="Strong R."/>
            <person name="Sun E."/>
            <person name="Svirskas R."/>
            <person name="Tector C."/>
            <person name="Turner R."/>
            <person name="Venter E."/>
            <person name="Wang A.H."/>
            <person name="Wang X."/>
            <person name="Wang Z.-Y."/>
            <person name="Wassarman D.A."/>
            <person name="Weinstock G.M."/>
            <person name="Weissenbach J."/>
            <person name="Williams S.M."/>
            <person name="Woodage T."/>
            <person name="Worley K.C."/>
            <person name="Wu D."/>
            <person name="Yang S."/>
            <person name="Yao Q.A."/>
            <person name="Ye J."/>
            <person name="Yeh R.-F."/>
            <person name="Zaveri J.S."/>
            <person name="Zhan M."/>
            <person name="Zhang G."/>
            <person name="Zhao Q."/>
            <person name="Zheng L."/>
            <person name="Zheng X.H."/>
            <person name="Zhong F.N."/>
            <person name="Zhong W."/>
            <person name="Zhou X."/>
            <person name="Zhu S.C."/>
            <person name="Zhu X."/>
            <person name="Smith H.O."/>
            <person name="Gibbs R.A."/>
            <person name="Myers E.W."/>
            <person name="Rubin G.M."/>
            <person name="Venter J.C."/>
        </authorList>
    </citation>
    <scope>NUCLEOTIDE SEQUENCE [LARGE SCALE GENOMIC DNA]</scope>
    <source>
        <strain>Berkeley</strain>
    </source>
</reference>
<reference key="2">
    <citation type="journal article" date="2002" name="Genome Biol.">
        <title>Annotation of the Drosophila melanogaster euchromatic genome: a systematic review.</title>
        <authorList>
            <person name="Misra S."/>
            <person name="Crosby M.A."/>
            <person name="Mungall C.J."/>
            <person name="Matthews B.B."/>
            <person name="Campbell K.S."/>
            <person name="Hradecky P."/>
            <person name="Huang Y."/>
            <person name="Kaminker J.S."/>
            <person name="Millburn G.H."/>
            <person name="Prochnik S.E."/>
            <person name="Smith C.D."/>
            <person name="Tupy J.L."/>
            <person name="Whitfield E.J."/>
            <person name="Bayraktaroglu L."/>
            <person name="Berman B.P."/>
            <person name="Bettencourt B.R."/>
            <person name="Celniker S.E."/>
            <person name="de Grey A.D.N.J."/>
            <person name="Drysdale R.A."/>
            <person name="Harris N.L."/>
            <person name="Richter J."/>
            <person name="Russo S."/>
            <person name="Schroeder A.J."/>
            <person name="Shu S.Q."/>
            <person name="Stapleton M."/>
            <person name="Yamada C."/>
            <person name="Ashburner M."/>
            <person name="Gelbart W.M."/>
            <person name="Rubin G.M."/>
            <person name="Lewis S.E."/>
        </authorList>
    </citation>
    <scope>GENOME REANNOTATION</scope>
    <source>
        <strain>Berkeley</strain>
    </source>
</reference>
<reference key="3">
    <citation type="journal article" date="1996" name="Mol. Gen. Genet.">
        <title>Cytochrome P450 gene clusters in Drosophila melanogaster.</title>
        <authorList>
            <person name="Dunkov B.C."/>
            <person name="Rodriguez-Arnaiz R."/>
            <person name="Pittendrigh B."/>
            <person name="ffrench-Constant R.H."/>
            <person name="Feyereisen R."/>
        </authorList>
    </citation>
    <scope>NUCLEOTIDE SEQUENCE OF 326-444</scope>
    <source>
        <strain>Haag-79</strain>
        <strain>Hikone-R</strain>
    </source>
</reference>
<evidence type="ECO:0000250" key="1"/>
<evidence type="ECO:0000305" key="2"/>
<accession>Q9V4I0</accession>
<accession>Q24122</accession>
<protein>
    <recommendedName>
        <fullName>Cytochrome P450 9b1</fullName>
        <ecNumber>1.14.-.-</ecNumber>
    </recommendedName>
    <alternativeName>
        <fullName>CYPIXB1</fullName>
    </alternativeName>
</protein>